<proteinExistence type="inferred from homology"/>
<reference key="1">
    <citation type="journal article" date="2006" name="Virology">
        <title>The genome of Epstein-Barr virus type 2 strain AG876.</title>
        <authorList>
            <person name="Dolan A."/>
            <person name="Addison C."/>
            <person name="Gatherer D."/>
            <person name="Davison A.J."/>
            <person name="McGeoch D.J."/>
        </authorList>
    </citation>
    <scope>NUCLEOTIDE SEQUENCE [LARGE SCALE GENOMIC DNA] (ISOFORMS LMP2A AND LMP2B)</scope>
</reference>
<gene>
    <name type="primary">LMP2</name>
</gene>
<dbReference type="EMBL" id="DQ279927">
    <property type="protein sequence ID" value="ABB89217.1"/>
    <property type="status" value="ALT_SEQ"/>
    <property type="molecule type" value="Genomic_DNA"/>
</dbReference>
<dbReference type="EMBL" id="DQ279927">
    <property type="protein sequence ID" value="ABB89219.1"/>
    <property type="status" value="ALT_SEQ"/>
    <property type="molecule type" value="Genomic_DNA"/>
</dbReference>
<dbReference type="RefSeq" id="YP_001129436.1">
    <property type="nucleotide sequence ID" value="NC_009334.1"/>
</dbReference>
<dbReference type="BMRB" id="Q1HVJ2"/>
<dbReference type="SMR" id="Q1HVJ2"/>
<dbReference type="KEGG" id="vg:5176182"/>
<dbReference type="KEGG" id="vg:5176195"/>
<dbReference type="Proteomes" id="UP000007639">
    <property type="component" value="Genome"/>
</dbReference>
<dbReference type="GO" id="GO:0033645">
    <property type="term" value="C:host cell endomembrane system"/>
    <property type="evidence" value="ECO:0007669"/>
    <property type="project" value="UniProtKB-SubCell"/>
</dbReference>
<dbReference type="GO" id="GO:0044220">
    <property type="term" value="C:host cell perinuclear region of cytoplasm"/>
    <property type="evidence" value="ECO:0007669"/>
    <property type="project" value="UniProtKB-SubCell"/>
</dbReference>
<dbReference type="GO" id="GO:0020002">
    <property type="term" value="C:host cell plasma membrane"/>
    <property type="evidence" value="ECO:0007669"/>
    <property type="project" value="UniProtKB-SubCell"/>
</dbReference>
<dbReference type="GO" id="GO:0016020">
    <property type="term" value="C:membrane"/>
    <property type="evidence" value="ECO:0007669"/>
    <property type="project" value="UniProtKB-KW"/>
</dbReference>
<dbReference type="GO" id="GO:0039648">
    <property type="term" value="P:symbiont-mediated perturbation of host ubiquitin-like protein modification"/>
    <property type="evidence" value="ECO:0007669"/>
    <property type="project" value="UniProtKB-KW"/>
</dbReference>
<dbReference type="GO" id="GO:0019042">
    <property type="term" value="P:viral latency"/>
    <property type="evidence" value="ECO:0007669"/>
    <property type="project" value="InterPro"/>
</dbReference>
<dbReference type="InterPro" id="IPR010881">
    <property type="entry name" value="Herpes_LMP2"/>
</dbReference>
<dbReference type="Pfam" id="PF07415">
    <property type="entry name" value="Herpes_LMP2"/>
    <property type="match status" value="1"/>
</dbReference>
<keyword id="KW-0025">Alternative splicing</keyword>
<keyword id="KW-1032">Host cell membrane</keyword>
<keyword id="KW-1035">Host cytoplasm</keyword>
<keyword id="KW-1043">Host membrane</keyword>
<keyword id="KW-0945">Host-virus interaction</keyword>
<keyword id="KW-0472">Membrane</keyword>
<keyword id="KW-1123">Modulation of host E3 ubiquitin ligases by virus</keyword>
<keyword id="KW-1130">Modulation of host ubiquitin pathway by virus</keyword>
<keyword id="KW-0597">Phosphoprotein</keyword>
<keyword id="KW-1185">Reference proteome</keyword>
<keyword id="KW-0812">Transmembrane</keyword>
<keyword id="KW-1133">Transmembrane helix</keyword>
<keyword id="KW-0832">Ubl conjugation</keyword>
<sequence>MGSLEMVPMGAGPPSPGGDPDGDDGGNNSQYPSASGSSGNTPTPPNDEERESNEEPPPPYEDPYWGNGDRHSDYQPLGTQDQSLYLGLQHDGNDGLPPPPYSPRDDSSQHIYEEAGRGSMNPVCLPVIVAPYLFWLAAIAASCFTASVSTVVTATGLALSLLLLAAVASSYAAAQRKLLTPVTVLTAVVTFFAICLTWRIEDPPFNSLLFALLAAAGGLQGIYVLVMLVLLILAYRRRWRRLTVCGGIMFLACVLVLIVDAVLQLSPLLGAVTVVSMTLLLLAFVLWLSSPGGLGTLGAALLTLAAALALLASLILGTLNLTTMFLLMLLWTLVVLLICSSCSSCPLSKILLARLFLYALALLLLASALIAGGSILQTNFKSLSSTEFIPNLFCMLLLIVAGILFILAILTEWGSGNRTYGPVFMCLGGLLTMVAGAVWLTVMTNTLLSAWILTAGFLIFLIGFALFGVIRCCRYCCYYCLTLESEERPPTPYRNTV</sequence>
<organismHost>
    <name type="scientific">Homo sapiens</name>
    <name type="common">Human</name>
    <dbReference type="NCBI Taxonomy" id="9606"/>
</organismHost>
<protein>
    <recommendedName>
        <fullName>Latent membrane protein 2</fullName>
    </recommendedName>
    <alternativeName>
        <fullName>Terminal protein</fullName>
    </alternativeName>
</protein>
<evidence type="ECO:0000250" key="1"/>
<evidence type="ECO:0000250" key="2">
    <source>
        <dbReference type="UniProtKB" id="P13285"/>
    </source>
</evidence>
<evidence type="ECO:0000255" key="3"/>
<evidence type="ECO:0000256" key="4">
    <source>
        <dbReference type="SAM" id="MobiDB-lite"/>
    </source>
</evidence>
<evidence type="ECO:0000305" key="5"/>
<name>LMP2_EBVA8</name>
<comment type="function">
    <molecule>Isoform LMP2A</molecule>
    <text evidence="1">Maintains EBV latent infection of B-lymphocyte, by preventing lytic reactivation of the virus in response to surface immunoglobulin (sIg) cross-linking. Acts like a dominant negative inhibitor of the sIg-associated protein tyrosine kinases, LYN and SYK. Also blocks translocation of the B-cell antigen receptor (BCR) into lipid rafts, preventing the subsequent signaling and accelerated internalization of the BCR upon BCR cross-linking. Serves as a molecular scaffold to recruit SYK, LYN and E3 protein-ubiquitin ligases, such as ITCH and NEDD4L, leading to ubiquitination and potential degradation of both tyrosines kinases. Possesses a constitutive signaling activity in non-transformed cells, inducing bypass of normal B lymphocyte developmental checkpoints allowing immunoglobulin-negative cells to colonize peripheral lymphoid organs (By similarity).</text>
</comment>
<comment type="function">
    <molecule>Isoform LMP2B</molecule>
    <text evidence="1">May be a negative regulator of isoform LMP2A.</text>
</comment>
<comment type="subunit">
    <molecule>Isoform LMP2A</molecule>
    <text evidence="2">The cytoplasmic N-terminal domain interacts with human SRC family protein tyrosine kinases SYK and LYN. Binds human ITCH, WWP2 and NEDD4L.</text>
</comment>
<comment type="subcellular location">
    <molecule>Isoform LMP2A</molecule>
    <subcellularLocation>
        <location>Host cell membrane</location>
        <topology>Multi-pass membrane protein</topology>
    </subcellularLocation>
    <text evidence="2">Isoform LMP2A is localized in plasma membrane lipid rafts.</text>
</comment>
<comment type="subcellular location">
    <molecule>Isoform LMP2B</molecule>
    <subcellularLocation>
        <location>Host endomembrane system</location>
        <topology>Multi-pass membrane protein</topology>
    </subcellularLocation>
    <subcellularLocation>
        <location>Host cytoplasm</location>
        <location>Host perinuclear region</location>
    </subcellularLocation>
    <text evidence="2">Isoform LMP2B localizes to perinuclear regions.</text>
</comment>
<comment type="alternative products">
    <event type="alternative splicing"/>
    <isoform>
        <id>Q1HVJ2-1</id>
        <name>LMP2A</name>
        <name>TP1</name>
        <sequence type="displayed"/>
    </isoform>
    <isoform>
        <id>Q1HVJ2-2</id>
        <name>LMP2B</name>
        <name>TP2</name>
        <sequence type="described" ref="VSP_037376"/>
    </isoform>
</comment>
<comment type="PTM">
    <molecule>Isoform LMP2A</molecule>
    <text evidence="2">Phosphorylated on cytoplasmic N-terminal tyrosine residues, possibly by human LYN.</text>
</comment>
<comment type="PTM">
    <text evidence="1">Can be ubiquitinated by human ITCH and WWP2 on the N-terminus in a lysine-independent manner.</text>
</comment>
<comment type="miscellaneous">
    <text>In healthy individuals, EBV typically establishes a persistent latent infection in which the virus can be detected in resting, nonproliferating peripheral B-lymphocytes. These latently infected cells express only 2 virally encoded genes, LMP2A and EBNA1.</text>
</comment>
<comment type="similarity">
    <text evidence="5">Belongs to the herpesviridae LMP-2 family.</text>
</comment>
<organism>
    <name type="scientific">Epstein-Barr virus (strain AG876)</name>
    <name type="common">HHV-4</name>
    <name type="synonym">Human herpesvirus 4</name>
    <dbReference type="NCBI Taxonomy" id="82830"/>
    <lineage>
        <taxon>Viruses</taxon>
        <taxon>Duplodnaviria</taxon>
        <taxon>Heunggongvirae</taxon>
        <taxon>Peploviricota</taxon>
        <taxon>Herviviricetes</taxon>
        <taxon>Herpesvirales</taxon>
        <taxon>Orthoherpesviridae</taxon>
        <taxon>Gammaherpesvirinae</taxon>
        <taxon>Lymphocryptovirus</taxon>
        <taxon>Lymphocryptovirus humangamma4</taxon>
        <taxon>Epstein-Barr virus (strain GD1)</taxon>
    </lineage>
</organism>
<accession>Q1HVJ2</accession>
<accession>Q1HVJ1</accession>
<feature type="chain" id="PRO_0000375963" description="Latent membrane protein 2">
    <location>
        <begin position="1"/>
        <end position="497"/>
    </location>
</feature>
<feature type="topological domain" description="Cytoplasmic" evidence="3">
    <location>
        <begin position="1"/>
        <end position="123"/>
    </location>
</feature>
<feature type="transmembrane region" description="Helical" evidence="3">
    <location>
        <begin position="124"/>
        <end position="144"/>
    </location>
</feature>
<feature type="topological domain" description="Extracellular" evidence="3">
    <location>
        <begin position="145"/>
        <end position="147"/>
    </location>
</feature>
<feature type="transmembrane region" description="Helical" evidence="3">
    <location>
        <begin position="148"/>
        <end position="168"/>
    </location>
</feature>
<feature type="topological domain" description="Cytoplasmic" evidence="3">
    <location>
        <begin position="169"/>
        <end position="177"/>
    </location>
</feature>
<feature type="transmembrane region" description="Helical" evidence="3">
    <location>
        <begin position="178"/>
        <end position="198"/>
    </location>
</feature>
<feature type="topological domain" description="Extracellular" evidence="3">
    <location>
        <begin position="199"/>
        <end position="211"/>
    </location>
</feature>
<feature type="transmembrane region" description="Helical" evidence="3">
    <location>
        <begin position="212"/>
        <end position="232"/>
    </location>
</feature>
<feature type="topological domain" description="Cytoplasmic" evidence="3">
    <location>
        <begin position="233"/>
        <end position="241"/>
    </location>
</feature>
<feature type="transmembrane region" description="Helical" evidence="3">
    <location>
        <begin position="242"/>
        <end position="262"/>
    </location>
</feature>
<feature type="topological domain" description="Extracellular" evidence="3">
    <location>
        <begin position="263"/>
        <end position="267"/>
    </location>
</feature>
<feature type="transmembrane region" description="Helical" evidence="3">
    <location>
        <begin position="268"/>
        <end position="288"/>
    </location>
</feature>
<feature type="topological domain" description="Cytoplasmic" evidence="3">
    <location>
        <begin position="289"/>
        <end position="296"/>
    </location>
</feature>
<feature type="transmembrane region" description="Helical" evidence="3">
    <location>
        <begin position="297"/>
        <end position="317"/>
    </location>
</feature>
<feature type="topological domain" description="Extracellular" evidence="3">
    <location>
        <position position="318"/>
    </location>
</feature>
<feature type="transmembrane region" description="Helical" evidence="3">
    <location>
        <begin position="319"/>
        <end position="339"/>
    </location>
</feature>
<feature type="topological domain" description="Cytoplasmic" evidence="3">
    <location>
        <begin position="340"/>
        <end position="354"/>
    </location>
</feature>
<feature type="transmembrane region" description="Helical" evidence="3">
    <location>
        <begin position="355"/>
        <end position="375"/>
    </location>
</feature>
<feature type="topological domain" description="Extracellular" evidence="3">
    <location>
        <begin position="376"/>
        <end position="388"/>
    </location>
</feature>
<feature type="transmembrane region" description="Helical" evidence="3">
    <location>
        <begin position="389"/>
        <end position="409"/>
    </location>
</feature>
<feature type="topological domain" description="Cytoplasmic" evidence="3">
    <location>
        <begin position="410"/>
        <end position="422"/>
    </location>
</feature>
<feature type="transmembrane region" description="Helical" evidence="3">
    <location>
        <begin position="423"/>
        <end position="443"/>
    </location>
</feature>
<feature type="topological domain" description="Extracellular" evidence="3">
    <location>
        <begin position="444"/>
        <end position="449"/>
    </location>
</feature>
<feature type="transmembrane region" description="Helical" evidence="3">
    <location>
        <begin position="450"/>
        <end position="470"/>
    </location>
</feature>
<feature type="topological domain" description="Cytoplasmic" evidence="3">
    <location>
        <begin position="471"/>
        <end position="497"/>
    </location>
</feature>
<feature type="region of interest" description="Disordered" evidence="4">
    <location>
        <begin position="1"/>
        <end position="108"/>
    </location>
</feature>
<feature type="short sequence motif" description="PPxY motif" evidence="1">
    <location>
        <begin position="97"/>
        <end position="101"/>
    </location>
</feature>
<feature type="compositionally biased region" description="Polar residues" evidence="4">
    <location>
        <begin position="27"/>
        <end position="41"/>
    </location>
</feature>
<feature type="modified residue" description="Phosphotyrosine; by host" evidence="3">
    <location>
        <position position="112"/>
    </location>
</feature>
<feature type="splice variant" id="VSP_037376" description="In isoform LMP2B." evidence="5">
    <location>
        <begin position="1"/>
        <end position="119"/>
    </location>
</feature>